<dbReference type="EMBL" id="AL123456">
    <property type="protein sequence ID" value="CCP45250.1"/>
    <property type="molecule type" value="Genomic_DNA"/>
</dbReference>
<dbReference type="PIR" id="H70864">
    <property type="entry name" value="H70864"/>
</dbReference>
<dbReference type="RefSeq" id="NP_216973.1">
    <property type="nucleotide sequence ID" value="NC_000962.3"/>
</dbReference>
<dbReference type="RefSeq" id="WP_003412634.1">
    <property type="nucleotide sequence ID" value="NZ_NVQJ01000024.1"/>
</dbReference>
<dbReference type="SMR" id="P9WPB9"/>
<dbReference type="FunCoup" id="P9WPB9">
    <property type="interactions" value="381"/>
</dbReference>
<dbReference type="STRING" id="83332.Rv2457c"/>
<dbReference type="PaxDb" id="83332-Rv2457c"/>
<dbReference type="DNASU" id="888167"/>
<dbReference type="GeneID" id="45426447"/>
<dbReference type="GeneID" id="888167"/>
<dbReference type="KEGG" id="mtu:Rv2457c"/>
<dbReference type="KEGG" id="mtv:RVBD_2457c"/>
<dbReference type="TubercuList" id="Rv2457c"/>
<dbReference type="eggNOG" id="COG1219">
    <property type="taxonomic scope" value="Bacteria"/>
</dbReference>
<dbReference type="InParanoid" id="P9WPB9"/>
<dbReference type="OrthoDB" id="9804062at2"/>
<dbReference type="PhylomeDB" id="P9WPB9"/>
<dbReference type="Proteomes" id="UP000001584">
    <property type="component" value="Chromosome"/>
</dbReference>
<dbReference type="GO" id="GO:0009376">
    <property type="term" value="C:HslUV protease complex"/>
    <property type="evidence" value="ECO:0000318"/>
    <property type="project" value="GO_Central"/>
</dbReference>
<dbReference type="GO" id="GO:0009274">
    <property type="term" value="C:peptidoglycan-based cell wall"/>
    <property type="evidence" value="ECO:0007005"/>
    <property type="project" value="MTBBASE"/>
</dbReference>
<dbReference type="GO" id="GO:0005524">
    <property type="term" value="F:ATP binding"/>
    <property type="evidence" value="ECO:0000318"/>
    <property type="project" value="GO_Central"/>
</dbReference>
<dbReference type="GO" id="GO:0016887">
    <property type="term" value="F:ATP hydrolysis activity"/>
    <property type="evidence" value="ECO:0000318"/>
    <property type="project" value="GO_Central"/>
</dbReference>
<dbReference type="GO" id="GO:0140662">
    <property type="term" value="F:ATP-dependent protein folding chaperone"/>
    <property type="evidence" value="ECO:0007669"/>
    <property type="project" value="InterPro"/>
</dbReference>
<dbReference type="GO" id="GO:0046983">
    <property type="term" value="F:protein dimerization activity"/>
    <property type="evidence" value="ECO:0007669"/>
    <property type="project" value="InterPro"/>
</dbReference>
<dbReference type="GO" id="GO:0051082">
    <property type="term" value="F:unfolded protein binding"/>
    <property type="evidence" value="ECO:0007669"/>
    <property type="project" value="UniProtKB-UniRule"/>
</dbReference>
<dbReference type="GO" id="GO:0008270">
    <property type="term" value="F:zinc ion binding"/>
    <property type="evidence" value="ECO:0007669"/>
    <property type="project" value="InterPro"/>
</dbReference>
<dbReference type="GO" id="GO:0051301">
    <property type="term" value="P:cell division"/>
    <property type="evidence" value="ECO:0000315"/>
    <property type="project" value="CACAO"/>
</dbReference>
<dbReference type="GO" id="GO:0032272">
    <property type="term" value="P:negative regulation of protein polymerization"/>
    <property type="evidence" value="ECO:0000314"/>
    <property type="project" value="CACAO"/>
</dbReference>
<dbReference type="GO" id="GO:0051603">
    <property type="term" value="P:proteolysis involved in protein catabolic process"/>
    <property type="evidence" value="ECO:0000318"/>
    <property type="project" value="GO_Central"/>
</dbReference>
<dbReference type="CDD" id="cd19497">
    <property type="entry name" value="RecA-like_ClpX"/>
    <property type="match status" value="1"/>
</dbReference>
<dbReference type="FunFam" id="1.10.8.60:FF:000002">
    <property type="entry name" value="ATP-dependent Clp protease ATP-binding subunit ClpX"/>
    <property type="match status" value="1"/>
</dbReference>
<dbReference type="FunFam" id="3.40.50.300:FF:000005">
    <property type="entry name" value="ATP-dependent Clp protease ATP-binding subunit ClpX"/>
    <property type="match status" value="1"/>
</dbReference>
<dbReference type="Gene3D" id="1.10.8.60">
    <property type="match status" value="1"/>
</dbReference>
<dbReference type="Gene3D" id="6.20.220.10">
    <property type="entry name" value="ClpX chaperone, C4-type zinc finger domain"/>
    <property type="match status" value="1"/>
</dbReference>
<dbReference type="Gene3D" id="3.40.50.300">
    <property type="entry name" value="P-loop containing nucleotide triphosphate hydrolases"/>
    <property type="match status" value="1"/>
</dbReference>
<dbReference type="HAMAP" id="MF_00175">
    <property type="entry name" value="ClpX"/>
    <property type="match status" value="1"/>
</dbReference>
<dbReference type="InterPro" id="IPR003593">
    <property type="entry name" value="AAA+_ATPase"/>
</dbReference>
<dbReference type="InterPro" id="IPR050052">
    <property type="entry name" value="ATP-dep_Clp_protease_ClpX"/>
</dbReference>
<dbReference type="InterPro" id="IPR003959">
    <property type="entry name" value="ATPase_AAA_core"/>
</dbReference>
<dbReference type="InterPro" id="IPR019489">
    <property type="entry name" value="Clp_ATPase_C"/>
</dbReference>
<dbReference type="InterPro" id="IPR004487">
    <property type="entry name" value="Clp_protease_ATP-bd_su_ClpX"/>
</dbReference>
<dbReference type="InterPro" id="IPR046425">
    <property type="entry name" value="ClpX_bact"/>
</dbReference>
<dbReference type="InterPro" id="IPR027417">
    <property type="entry name" value="P-loop_NTPase"/>
</dbReference>
<dbReference type="InterPro" id="IPR010603">
    <property type="entry name" value="Znf_CppX_C4"/>
</dbReference>
<dbReference type="InterPro" id="IPR038366">
    <property type="entry name" value="Znf_CppX_C4_sf"/>
</dbReference>
<dbReference type="NCBIfam" id="TIGR00382">
    <property type="entry name" value="clpX"/>
    <property type="match status" value="1"/>
</dbReference>
<dbReference type="NCBIfam" id="NF003745">
    <property type="entry name" value="PRK05342.1"/>
    <property type="match status" value="1"/>
</dbReference>
<dbReference type="PANTHER" id="PTHR48102:SF7">
    <property type="entry name" value="ATP-DEPENDENT CLP PROTEASE ATP-BINDING SUBUNIT CLPX-LIKE, MITOCHONDRIAL"/>
    <property type="match status" value="1"/>
</dbReference>
<dbReference type="PANTHER" id="PTHR48102">
    <property type="entry name" value="ATP-DEPENDENT CLP PROTEASE ATP-BINDING SUBUNIT CLPX-LIKE, MITOCHONDRIAL-RELATED"/>
    <property type="match status" value="1"/>
</dbReference>
<dbReference type="Pfam" id="PF07724">
    <property type="entry name" value="AAA_2"/>
    <property type="match status" value="1"/>
</dbReference>
<dbReference type="Pfam" id="PF10431">
    <property type="entry name" value="ClpB_D2-small"/>
    <property type="match status" value="1"/>
</dbReference>
<dbReference type="Pfam" id="PF06689">
    <property type="entry name" value="zf-C4_ClpX"/>
    <property type="match status" value="1"/>
</dbReference>
<dbReference type="SMART" id="SM00382">
    <property type="entry name" value="AAA"/>
    <property type="match status" value="1"/>
</dbReference>
<dbReference type="SMART" id="SM01086">
    <property type="entry name" value="ClpB_D2-small"/>
    <property type="match status" value="1"/>
</dbReference>
<dbReference type="SMART" id="SM00994">
    <property type="entry name" value="zf-C4_ClpX"/>
    <property type="match status" value="1"/>
</dbReference>
<dbReference type="SUPFAM" id="SSF57716">
    <property type="entry name" value="Glucocorticoid receptor-like (DNA-binding domain)"/>
    <property type="match status" value="1"/>
</dbReference>
<dbReference type="SUPFAM" id="SSF52540">
    <property type="entry name" value="P-loop containing nucleoside triphosphate hydrolases"/>
    <property type="match status" value="1"/>
</dbReference>
<dbReference type="PROSITE" id="PS51902">
    <property type="entry name" value="CLPX_ZB"/>
    <property type="match status" value="1"/>
</dbReference>
<sequence>MARIGDGGDLLKCSFCGKSQKQVKKLIAGPGVYICDECIDLCNEIIEEELADADDVKLDELPKPAEIREFLEGYVIGQDTAKRTLAVAVYNHYKRIQAGEKGRDSRCEPVELTKSNILMLGPTGCGKTYLAQTLAKMLNVPFAIADATALTEAGYVGEDVENILLKLIQAADYDVKRAETGIIYIDEVDKIARKSENPSITRDVSGEGVQQALLKILEGTQASVPPQGGRKHPHQEFIQIDTTNVLFIVAGAFAGLEKIIYERVGKRGLGFGAEVRSKAEIDTTDHFADVMPEDLIKFGLIPEFIGRLPVVASVTNLDKESLVKILSEPKNALVKQYIRLFEMDGVELEFTDDALEAIADQAIHRGTGARGLRAIMEEVLLPVMYDIPSRDDVAKVVVTKETVQDNVLPTIVPRKPSRSERRDKSA</sequence>
<comment type="function">
    <text evidence="1 4">ATP-dependent specificity component of the Clp protease. It directs the protease to specific substrates. Can perform chaperone functions in the absence of ClpP (By similarity). Degrades anti-sigma-D factor RsdA when present in a complex with ClpP1 and ClpP2. Does not seem to act on anti-sigma-L factor RslA.</text>
</comment>
<comment type="subunit">
    <text evidence="1 3 4">Component of the ClpX-ClpP complex. Forms a hexameric ring that, in the presence of ATP, binds to fourteen ClpP subunits assembled into a disk-like structure with a central cavity, resembling the structure of eukaryotic proteasomes (By similarity). Forms a complex with ClpP1 and ClpP2. Interacts with RseA but does not seem to help degrade it.</text>
</comment>
<comment type="similarity">
    <text evidence="1">Belongs to the ClpX chaperone family.</text>
</comment>
<gene>
    <name evidence="1" type="primary">clpX</name>
    <name type="ordered locus">Rv2457c</name>
    <name type="ORF">MTV008.13c</name>
</gene>
<organism>
    <name type="scientific">Mycobacterium tuberculosis (strain ATCC 25618 / H37Rv)</name>
    <dbReference type="NCBI Taxonomy" id="83332"/>
    <lineage>
        <taxon>Bacteria</taxon>
        <taxon>Bacillati</taxon>
        <taxon>Actinomycetota</taxon>
        <taxon>Actinomycetes</taxon>
        <taxon>Mycobacteriales</taxon>
        <taxon>Mycobacteriaceae</taxon>
        <taxon>Mycobacterium</taxon>
        <taxon>Mycobacterium tuberculosis complex</taxon>
    </lineage>
</organism>
<proteinExistence type="evidence at protein level"/>
<reference key="1">
    <citation type="journal article" date="1998" name="Nature">
        <title>Deciphering the biology of Mycobacterium tuberculosis from the complete genome sequence.</title>
        <authorList>
            <person name="Cole S.T."/>
            <person name="Brosch R."/>
            <person name="Parkhill J."/>
            <person name="Garnier T."/>
            <person name="Churcher C.M."/>
            <person name="Harris D.E."/>
            <person name="Gordon S.V."/>
            <person name="Eiglmeier K."/>
            <person name="Gas S."/>
            <person name="Barry C.E. III"/>
            <person name="Tekaia F."/>
            <person name="Badcock K."/>
            <person name="Basham D."/>
            <person name="Brown D."/>
            <person name="Chillingworth T."/>
            <person name="Connor R."/>
            <person name="Davies R.M."/>
            <person name="Devlin K."/>
            <person name="Feltwell T."/>
            <person name="Gentles S."/>
            <person name="Hamlin N."/>
            <person name="Holroyd S."/>
            <person name="Hornsby T."/>
            <person name="Jagels K."/>
            <person name="Krogh A."/>
            <person name="McLean J."/>
            <person name="Moule S."/>
            <person name="Murphy L.D."/>
            <person name="Oliver S."/>
            <person name="Osborne J."/>
            <person name="Quail M.A."/>
            <person name="Rajandream M.A."/>
            <person name="Rogers J."/>
            <person name="Rutter S."/>
            <person name="Seeger K."/>
            <person name="Skelton S."/>
            <person name="Squares S."/>
            <person name="Squares R."/>
            <person name="Sulston J.E."/>
            <person name="Taylor K."/>
            <person name="Whitehead S."/>
            <person name="Barrell B.G."/>
        </authorList>
    </citation>
    <scope>NUCLEOTIDE SEQUENCE [LARGE SCALE GENOMIC DNA]</scope>
    <source>
        <strain>ATCC 25618 / H37Rv</strain>
    </source>
</reference>
<reference key="2">
    <citation type="journal article" date="2010" name="Mol. Microbiol.">
        <title>RseA, the SigE specific anti-sigma factor of Mycobacterium tuberculosis, is inactivated by phosphorylation-dependent ClpC1P2 proteolysis.</title>
        <authorList>
            <person name="Barik S."/>
            <person name="Sureka K."/>
            <person name="Mukherjee P."/>
            <person name="Basu J."/>
            <person name="Kundu M."/>
        </authorList>
    </citation>
    <scope>INTERACTION WITH RSEA</scope>
    <source>
        <strain>ATCC 25618 / H37Rv</strain>
    </source>
</reference>
<reference key="3">
    <citation type="journal article" date="2011" name="Mol. Cell. Proteomics">
        <title>Proteogenomic analysis of Mycobacterium tuberculosis by high resolution mass spectrometry.</title>
        <authorList>
            <person name="Kelkar D.S."/>
            <person name="Kumar D."/>
            <person name="Kumar P."/>
            <person name="Balakrishnan L."/>
            <person name="Muthusamy B."/>
            <person name="Yadav A.K."/>
            <person name="Shrivastava P."/>
            <person name="Marimuthu A."/>
            <person name="Anand S."/>
            <person name="Sundaram H."/>
            <person name="Kingsbury R."/>
            <person name="Harsha H.C."/>
            <person name="Nair B."/>
            <person name="Prasad T.S."/>
            <person name="Chauhan D.S."/>
            <person name="Katoch K."/>
            <person name="Katoch V.M."/>
            <person name="Kumar P."/>
            <person name="Chaerkady R."/>
            <person name="Ramachandran S."/>
            <person name="Dash D."/>
            <person name="Pandey A."/>
        </authorList>
    </citation>
    <scope>IDENTIFICATION BY MASS SPECTROMETRY [LARGE SCALE ANALYSIS]</scope>
    <source>
        <strain>ATCC 25618 / H37Rv</strain>
    </source>
</reference>
<reference key="4">
    <citation type="journal article" date="2013" name="Nucleic Acids Res.">
        <title>Mycobacterium tuberculosis RsdA provides a conformational rationale for selective regulation of sigma-factor activity by proteolysis.</title>
        <authorList>
            <person name="Jaiswal R.K."/>
            <person name="Prabha T.S."/>
            <person name="Manjeera G."/>
            <person name="Gopal B."/>
        </authorList>
    </citation>
    <scope>FUNCTION</scope>
    <scope>INTERACTION WITH CLPP1 AND CLPP2</scope>
    <source>
        <strain>ATCC 25618 / H37Rv</strain>
    </source>
</reference>
<evidence type="ECO:0000255" key="1">
    <source>
        <dbReference type="HAMAP-Rule" id="MF_00175"/>
    </source>
</evidence>
<evidence type="ECO:0000255" key="2">
    <source>
        <dbReference type="PROSITE-ProRule" id="PRU01250"/>
    </source>
</evidence>
<evidence type="ECO:0000269" key="3">
    <source>
    </source>
</evidence>
<evidence type="ECO:0000269" key="4">
    <source>
    </source>
</evidence>
<accession>P9WPB9</accession>
<accession>L0T9P2</accession>
<accession>O53184</accession>
<accession>P0A528</accession>
<keyword id="KW-0067">ATP-binding</keyword>
<keyword id="KW-0143">Chaperone</keyword>
<keyword id="KW-0479">Metal-binding</keyword>
<keyword id="KW-0547">Nucleotide-binding</keyword>
<keyword id="KW-1185">Reference proteome</keyword>
<keyword id="KW-0862">Zinc</keyword>
<feature type="chain" id="PRO_0000160388" description="ATP-dependent Clp protease ATP-binding subunit ClpX">
    <location>
        <begin position="1"/>
        <end position="426"/>
    </location>
</feature>
<feature type="domain" description="ClpX-type ZB" evidence="2">
    <location>
        <begin position="1"/>
        <end position="54"/>
    </location>
</feature>
<feature type="binding site" evidence="2">
    <location>
        <position position="13"/>
    </location>
    <ligand>
        <name>Zn(2+)</name>
        <dbReference type="ChEBI" id="CHEBI:29105"/>
    </ligand>
</feature>
<feature type="binding site" evidence="2">
    <location>
        <position position="16"/>
    </location>
    <ligand>
        <name>Zn(2+)</name>
        <dbReference type="ChEBI" id="CHEBI:29105"/>
    </ligand>
</feature>
<feature type="binding site" evidence="2">
    <location>
        <position position="35"/>
    </location>
    <ligand>
        <name>Zn(2+)</name>
        <dbReference type="ChEBI" id="CHEBI:29105"/>
    </ligand>
</feature>
<feature type="binding site" evidence="2">
    <location>
        <position position="38"/>
    </location>
    <ligand>
        <name>Zn(2+)</name>
        <dbReference type="ChEBI" id="CHEBI:29105"/>
    </ligand>
</feature>
<feature type="binding site" evidence="1">
    <location>
        <begin position="122"/>
        <end position="129"/>
    </location>
    <ligand>
        <name>ATP</name>
        <dbReference type="ChEBI" id="CHEBI:30616"/>
    </ligand>
</feature>
<protein>
    <recommendedName>
        <fullName evidence="1">ATP-dependent Clp protease ATP-binding subunit ClpX</fullName>
    </recommendedName>
</protein>
<name>CLPX_MYCTU</name>